<organism>
    <name type="scientific">Rickettsia conorii (strain ATCC VR-613 / Malish 7)</name>
    <dbReference type="NCBI Taxonomy" id="272944"/>
    <lineage>
        <taxon>Bacteria</taxon>
        <taxon>Pseudomonadati</taxon>
        <taxon>Pseudomonadota</taxon>
        <taxon>Alphaproteobacteria</taxon>
        <taxon>Rickettsiales</taxon>
        <taxon>Rickettsiaceae</taxon>
        <taxon>Rickettsieae</taxon>
        <taxon>Rickettsia</taxon>
        <taxon>spotted fever group</taxon>
    </lineage>
</organism>
<dbReference type="EC" id="3.4.23.36" evidence="1"/>
<dbReference type="EMBL" id="AE006914">
    <property type="protein sequence ID" value="AAL03096.1"/>
    <property type="status" value="ALT_INIT"/>
    <property type="molecule type" value="Genomic_DNA"/>
</dbReference>
<dbReference type="PIR" id="F97769">
    <property type="entry name" value="F97769"/>
</dbReference>
<dbReference type="RefSeq" id="WP_041471721.1">
    <property type="nucleotide sequence ID" value="NC_003103.1"/>
</dbReference>
<dbReference type="SMR" id="Q92I62"/>
<dbReference type="GeneID" id="927668"/>
<dbReference type="KEGG" id="rco:RC0558"/>
<dbReference type="PATRIC" id="fig|272944.4.peg.637"/>
<dbReference type="HOGENOM" id="CLU_083252_4_3_5"/>
<dbReference type="UniPathway" id="UPA00665"/>
<dbReference type="Proteomes" id="UP000000816">
    <property type="component" value="Chromosome"/>
</dbReference>
<dbReference type="GO" id="GO:0005886">
    <property type="term" value="C:plasma membrane"/>
    <property type="evidence" value="ECO:0007669"/>
    <property type="project" value="UniProtKB-SubCell"/>
</dbReference>
<dbReference type="GO" id="GO:0004190">
    <property type="term" value="F:aspartic-type endopeptidase activity"/>
    <property type="evidence" value="ECO:0007669"/>
    <property type="project" value="UniProtKB-UniRule"/>
</dbReference>
<dbReference type="GO" id="GO:0006508">
    <property type="term" value="P:proteolysis"/>
    <property type="evidence" value="ECO:0007669"/>
    <property type="project" value="UniProtKB-KW"/>
</dbReference>
<dbReference type="HAMAP" id="MF_00161">
    <property type="entry name" value="LspA"/>
    <property type="match status" value="1"/>
</dbReference>
<dbReference type="InterPro" id="IPR001872">
    <property type="entry name" value="Peptidase_A8"/>
</dbReference>
<dbReference type="NCBIfam" id="TIGR00077">
    <property type="entry name" value="lspA"/>
    <property type="match status" value="1"/>
</dbReference>
<dbReference type="PANTHER" id="PTHR33695">
    <property type="entry name" value="LIPOPROTEIN SIGNAL PEPTIDASE"/>
    <property type="match status" value="1"/>
</dbReference>
<dbReference type="PANTHER" id="PTHR33695:SF1">
    <property type="entry name" value="LIPOPROTEIN SIGNAL PEPTIDASE"/>
    <property type="match status" value="1"/>
</dbReference>
<dbReference type="Pfam" id="PF01252">
    <property type="entry name" value="Peptidase_A8"/>
    <property type="match status" value="1"/>
</dbReference>
<dbReference type="PRINTS" id="PR00781">
    <property type="entry name" value="LIPOSIGPTASE"/>
</dbReference>
<dbReference type="PROSITE" id="PS00855">
    <property type="entry name" value="SPASE_II"/>
    <property type="match status" value="1"/>
</dbReference>
<proteinExistence type="inferred from homology"/>
<feature type="chain" id="PRO_0000178807" description="Lipoprotein signal peptidase">
    <location>
        <begin position="1"/>
        <end position="201"/>
    </location>
</feature>
<feature type="transmembrane region" description="Helical" evidence="1">
    <location>
        <begin position="73"/>
        <end position="93"/>
    </location>
</feature>
<feature type="transmembrane region" description="Helical" evidence="1">
    <location>
        <begin position="97"/>
        <end position="117"/>
    </location>
</feature>
<feature type="transmembrane region" description="Helical" evidence="1">
    <location>
        <begin position="135"/>
        <end position="155"/>
    </location>
</feature>
<feature type="active site" evidence="1">
    <location>
        <position position="126"/>
    </location>
</feature>
<feature type="active site" evidence="1">
    <location>
        <position position="144"/>
    </location>
</feature>
<evidence type="ECO:0000255" key="1">
    <source>
        <dbReference type="HAMAP-Rule" id="MF_00161"/>
    </source>
</evidence>
<evidence type="ECO:0000305" key="2"/>
<comment type="function">
    <text evidence="1">This protein specifically catalyzes the removal of signal peptides from prolipoproteins.</text>
</comment>
<comment type="catalytic activity">
    <reaction evidence="1">
        <text>Release of signal peptides from bacterial membrane prolipoproteins. Hydrolyzes -Xaa-Yaa-Zaa-|-(S,diacylglyceryl)Cys-, in which Xaa is hydrophobic (preferably Leu), and Yaa (Ala or Ser) and Zaa (Gly or Ala) have small, neutral side chains.</text>
        <dbReference type="EC" id="3.4.23.36"/>
    </reaction>
</comment>
<comment type="pathway">
    <text evidence="1">Protein modification; lipoprotein biosynthesis (signal peptide cleavage).</text>
</comment>
<comment type="subcellular location">
    <subcellularLocation>
        <location evidence="1">Cell inner membrane</location>
        <topology evidence="1">Multi-pass membrane protein</topology>
    </subcellularLocation>
</comment>
<comment type="similarity">
    <text evidence="1">Belongs to the peptidase A8 family.</text>
</comment>
<comment type="sequence caution" evidence="2">
    <conflict type="erroneous initiation">
        <sequence resource="EMBL-CDS" id="AAL03096"/>
    </conflict>
</comment>
<keyword id="KW-0064">Aspartyl protease</keyword>
<keyword id="KW-0997">Cell inner membrane</keyword>
<keyword id="KW-1003">Cell membrane</keyword>
<keyword id="KW-0378">Hydrolase</keyword>
<keyword id="KW-0472">Membrane</keyword>
<keyword id="KW-0645">Protease</keyword>
<keyword id="KW-0812">Transmembrane</keyword>
<keyword id="KW-1133">Transmembrane helix</keyword>
<accession>Q92I62</accession>
<protein>
    <recommendedName>
        <fullName evidence="1">Lipoprotein signal peptidase</fullName>
        <ecNumber evidence="1">3.4.23.36</ecNumber>
    </recommendedName>
    <alternativeName>
        <fullName evidence="1">Prolipoprotein signal peptidase</fullName>
    </alternativeName>
    <alternativeName>
        <fullName evidence="1">Signal peptidase II</fullName>
        <shortName evidence="1">SPase II</shortName>
    </alternativeName>
</protein>
<sequence>MLPLLKKLYLTFARSSRIIITLVIIDQLSKWWFIDNLRWKSGLMLKVTSFLNMVYTWNYGISFGLMREYYQYSNAIFLITNTIIVCYLYYLMIRSKTIGSFAGYSFVIGGAVGNLIDRFFRGAVFDFIHFHYQNYSFPVFNLADCFIIIGVIILIEDYYSTKKVIEEKAKGNYDNAQIEAMAEKIRNTDKGGNDKIASLQN</sequence>
<gene>
    <name evidence="1" type="primary">lspA</name>
    <name type="ordered locus">RC0558</name>
</gene>
<reference key="1">
    <citation type="journal article" date="2001" name="Science">
        <title>Mechanisms of evolution in Rickettsia conorii and R. prowazekii.</title>
        <authorList>
            <person name="Ogata H."/>
            <person name="Audic S."/>
            <person name="Renesto-Audiffren P."/>
            <person name="Fournier P.-E."/>
            <person name="Barbe V."/>
            <person name="Samson D."/>
            <person name="Roux V."/>
            <person name="Cossart P."/>
            <person name="Weissenbach J."/>
            <person name="Claverie J.-M."/>
            <person name="Raoult D."/>
        </authorList>
    </citation>
    <scope>NUCLEOTIDE SEQUENCE [LARGE SCALE GENOMIC DNA]</scope>
    <source>
        <strain>ATCC VR-613 / Malish 7</strain>
    </source>
</reference>
<name>LSPA_RICCN</name>